<keyword id="KW-0066">ATP synthesis</keyword>
<keyword id="KW-0997">Cell inner membrane</keyword>
<keyword id="KW-1003">Cell membrane</keyword>
<keyword id="KW-0139">CF(1)</keyword>
<keyword id="KW-0375">Hydrogen ion transport</keyword>
<keyword id="KW-0406">Ion transport</keyword>
<keyword id="KW-0472">Membrane</keyword>
<keyword id="KW-0813">Transport</keyword>
<gene>
    <name evidence="1" type="primary">atpH</name>
    <name type="ordered locus">Sbal195_4510</name>
</gene>
<accession>A9KX09</accession>
<feature type="chain" id="PRO_0000371128" description="ATP synthase subunit delta">
    <location>
        <begin position="1"/>
        <end position="177"/>
    </location>
</feature>
<name>ATPD_SHEB9</name>
<reference key="1">
    <citation type="submission" date="2007-11" db="EMBL/GenBank/DDBJ databases">
        <title>Complete sequence of chromosome of Shewanella baltica OS195.</title>
        <authorList>
            <consortium name="US DOE Joint Genome Institute"/>
            <person name="Copeland A."/>
            <person name="Lucas S."/>
            <person name="Lapidus A."/>
            <person name="Barry K."/>
            <person name="Glavina del Rio T."/>
            <person name="Dalin E."/>
            <person name="Tice H."/>
            <person name="Pitluck S."/>
            <person name="Chain P."/>
            <person name="Malfatti S."/>
            <person name="Shin M."/>
            <person name="Vergez L."/>
            <person name="Schmutz J."/>
            <person name="Larimer F."/>
            <person name="Land M."/>
            <person name="Hauser L."/>
            <person name="Kyrpides N."/>
            <person name="Kim E."/>
            <person name="Brettar I."/>
            <person name="Rodrigues J."/>
            <person name="Konstantinidis K."/>
            <person name="Klappenbach J."/>
            <person name="Hofle M."/>
            <person name="Tiedje J."/>
            <person name="Richardson P."/>
        </authorList>
    </citation>
    <scope>NUCLEOTIDE SEQUENCE [LARGE SCALE GENOMIC DNA]</scope>
    <source>
        <strain>OS195</strain>
    </source>
</reference>
<evidence type="ECO:0000255" key="1">
    <source>
        <dbReference type="HAMAP-Rule" id="MF_01416"/>
    </source>
</evidence>
<protein>
    <recommendedName>
        <fullName evidence="1">ATP synthase subunit delta</fullName>
    </recommendedName>
    <alternativeName>
        <fullName evidence="1">ATP synthase F(1) sector subunit delta</fullName>
    </alternativeName>
    <alternativeName>
        <fullName evidence="1">F-type ATPase subunit delta</fullName>
        <shortName evidence="1">F-ATPase subunit delta</shortName>
    </alternativeName>
</protein>
<dbReference type="EMBL" id="CP000891">
    <property type="protein sequence ID" value="ABX51667.1"/>
    <property type="molecule type" value="Genomic_DNA"/>
</dbReference>
<dbReference type="RefSeq" id="WP_006083842.1">
    <property type="nucleotide sequence ID" value="NC_009997.1"/>
</dbReference>
<dbReference type="SMR" id="A9KX09"/>
<dbReference type="GeneID" id="11774463"/>
<dbReference type="KEGG" id="sbn:Sbal195_4510"/>
<dbReference type="HOGENOM" id="CLU_085114_3_0_6"/>
<dbReference type="Proteomes" id="UP000000770">
    <property type="component" value="Chromosome"/>
</dbReference>
<dbReference type="GO" id="GO:0005886">
    <property type="term" value="C:plasma membrane"/>
    <property type="evidence" value="ECO:0007669"/>
    <property type="project" value="UniProtKB-SubCell"/>
</dbReference>
<dbReference type="GO" id="GO:0045259">
    <property type="term" value="C:proton-transporting ATP synthase complex"/>
    <property type="evidence" value="ECO:0007669"/>
    <property type="project" value="UniProtKB-KW"/>
</dbReference>
<dbReference type="GO" id="GO:0046933">
    <property type="term" value="F:proton-transporting ATP synthase activity, rotational mechanism"/>
    <property type="evidence" value="ECO:0007669"/>
    <property type="project" value="UniProtKB-UniRule"/>
</dbReference>
<dbReference type="Gene3D" id="1.10.520.20">
    <property type="entry name" value="N-terminal domain of the delta subunit of the F1F0-ATP synthase"/>
    <property type="match status" value="1"/>
</dbReference>
<dbReference type="HAMAP" id="MF_01416">
    <property type="entry name" value="ATP_synth_delta_bact"/>
    <property type="match status" value="1"/>
</dbReference>
<dbReference type="InterPro" id="IPR026015">
    <property type="entry name" value="ATP_synth_OSCP/delta_N_sf"/>
</dbReference>
<dbReference type="InterPro" id="IPR020781">
    <property type="entry name" value="ATPase_OSCP/d_CS"/>
</dbReference>
<dbReference type="InterPro" id="IPR000711">
    <property type="entry name" value="ATPase_OSCP/dsu"/>
</dbReference>
<dbReference type="NCBIfam" id="TIGR01145">
    <property type="entry name" value="ATP_synt_delta"/>
    <property type="match status" value="1"/>
</dbReference>
<dbReference type="NCBIfam" id="NF004402">
    <property type="entry name" value="PRK05758.2-2"/>
    <property type="match status" value="1"/>
</dbReference>
<dbReference type="NCBIfam" id="NF004404">
    <property type="entry name" value="PRK05758.2-5"/>
    <property type="match status" value="1"/>
</dbReference>
<dbReference type="PANTHER" id="PTHR11910">
    <property type="entry name" value="ATP SYNTHASE DELTA CHAIN"/>
    <property type="match status" value="1"/>
</dbReference>
<dbReference type="Pfam" id="PF00213">
    <property type="entry name" value="OSCP"/>
    <property type="match status" value="1"/>
</dbReference>
<dbReference type="PRINTS" id="PR00125">
    <property type="entry name" value="ATPASEDELTA"/>
</dbReference>
<dbReference type="SUPFAM" id="SSF47928">
    <property type="entry name" value="N-terminal domain of the delta subunit of the F1F0-ATP synthase"/>
    <property type="match status" value="1"/>
</dbReference>
<dbReference type="PROSITE" id="PS00389">
    <property type="entry name" value="ATPASE_DELTA"/>
    <property type="match status" value="1"/>
</dbReference>
<sequence length="177" mass="19190">MAELTTIARPYAKAAFDFAIEQDAVDSWAEMLTFAALVSENETMQPLLAGSLASTKLAALFISVCGEQVNVQGQNLIKVMAENGRLKVLPAVSQLFTEYRNEWAKEVEADVVSATELSSEQQQQISISLEKRLARKVKLNCSTDAALIAGVIIKTGDLVIDGSVRGKLSRLSDKLQS</sequence>
<proteinExistence type="inferred from homology"/>
<organism>
    <name type="scientific">Shewanella baltica (strain OS195)</name>
    <dbReference type="NCBI Taxonomy" id="399599"/>
    <lineage>
        <taxon>Bacteria</taxon>
        <taxon>Pseudomonadati</taxon>
        <taxon>Pseudomonadota</taxon>
        <taxon>Gammaproteobacteria</taxon>
        <taxon>Alteromonadales</taxon>
        <taxon>Shewanellaceae</taxon>
        <taxon>Shewanella</taxon>
    </lineage>
</organism>
<comment type="function">
    <text evidence="1">F(1)F(0) ATP synthase produces ATP from ADP in the presence of a proton or sodium gradient. F-type ATPases consist of two structural domains, F(1) containing the extramembraneous catalytic core and F(0) containing the membrane proton channel, linked together by a central stalk and a peripheral stalk. During catalysis, ATP synthesis in the catalytic domain of F(1) is coupled via a rotary mechanism of the central stalk subunits to proton translocation.</text>
</comment>
<comment type="function">
    <text evidence="1">This protein is part of the stalk that links CF(0) to CF(1). It either transmits conformational changes from CF(0) to CF(1) or is implicated in proton conduction.</text>
</comment>
<comment type="subunit">
    <text evidence="1">F-type ATPases have 2 components, F(1) - the catalytic core - and F(0) - the membrane proton channel. F(1) has five subunits: alpha(3), beta(3), gamma(1), delta(1), epsilon(1). F(0) has three main subunits: a(1), b(2) and c(10-14). The alpha and beta chains form an alternating ring which encloses part of the gamma chain. F(1) is attached to F(0) by a central stalk formed by the gamma and epsilon chains, while a peripheral stalk is formed by the delta and b chains.</text>
</comment>
<comment type="subcellular location">
    <subcellularLocation>
        <location evidence="1">Cell inner membrane</location>
        <topology evidence="1">Peripheral membrane protein</topology>
    </subcellularLocation>
</comment>
<comment type="similarity">
    <text evidence="1">Belongs to the ATPase delta chain family.</text>
</comment>